<proteinExistence type="inferred from homology"/>
<name>TRUA_ECOL5</name>
<keyword id="KW-0413">Isomerase</keyword>
<keyword id="KW-0819">tRNA processing</keyword>
<dbReference type="EC" id="5.4.99.12" evidence="1"/>
<dbReference type="EMBL" id="CP000247">
    <property type="protein sequence ID" value="ABG70351.1"/>
    <property type="molecule type" value="Genomic_DNA"/>
</dbReference>
<dbReference type="RefSeq" id="WP_001283598.1">
    <property type="nucleotide sequence ID" value="NC_008253.1"/>
</dbReference>
<dbReference type="SMR" id="Q0TFC8"/>
<dbReference type="KEGG" id="ecp:ECP_2357"/>
<dbReference type="HOGENOM" id="CLU_014673_0_2_6"/>
<dbReference type="Proteomes" id="UP000009182">
    <property type="component" value="Chromosome"/>
</dbReference>
<dbReference type="GO" id="GO:0003723">
    <property type="term" value="F:RNA binding"/>
    <property type="evidence" value="ECO:0007669"/>
    <property type="project" value="InterPro"/>
</dbReference>
<dbReference type="GO" id="GO:0160147">
    <property type="term" value="F:tRNA pseudouridine(38-40) synthase activity"/>
    <property type="evidence" value="ECO:0007669"/>
    <property type="project" value="UniProtKB-EC"/>
</dbReference>
<dbReference type="GO" id="GO:0031119">
    <property type="term" value="P:tRNA pseudouridine synthesis"/>
    <property type="evidence" value="ECO:0007669"/>
    <property type="project" value="UniProtKB-UniRule"/>
</dbReference>
<dbReference type="CDD" id="cd02570">
    <property type="entry name" value="PseudoU_synth_EcTruA"/>
    <property type="match status" value="1"/>
</dbReference>
<dbReference type="FunFam" id="3.30.70.580:FF:000001">
    <property type="entry name" value="tRNA pseudouridine synthase A"/>
    <property type="match status" value="1"/>
</dbReference>
<dbReference type="FunFam" id="3.30.70.660:FF:000001">
    <property type="entry name" value="tRNA pseudouridine synthase A"/>
    <property type="match status" value="1"/>
</dbReference>
<dbReference type="Gene3D" id="3.30.70.660">
    <property type="entry name" value="Pseudouridine synthase I, catalytic domain, C-terminal subdomain"/>
    <property type="match status" value="1"/>
</dbReference>
<dbReference type="Gene3D" id="3.30.70.580">
    <property type="entry name" value="Pseudouridine synthase I, catalytic domain, N-terminal subdomain"/>
    <property type="match status" value="1"/>
</dbReference>
<dbReference type="HAMAP" id="MF_00171">
    <property type="entry name" value="TruA"/>
    <property type="match status" value="1"/>
</dbReference>
<dbReference type="InterPro" id="IPR020103">
    <property type="entry name" value="PsdUridine_synth_cat_dom_sf"/>
</dbReference>
<dbReference type="InterPro" id="IPR001406">
    <property type="entry name" value="PsdUridine_synth_TruA"/>
</dbReference>
<dbReference type="InterPro" id="IPR020097">
    <property type="entry name" value="PsdUridine_synth_TruA_a/b_dom"/>
</dbReference>
<dbReference type="InterPro" id="IPR020095">
    <property type="entry name" value="PsdUridine_synth_TruA_C"/>
</dbReference>
<dbReference type="InterPro" id="IPR020094">
    <property type="entry name" value="TruA/RsuA/RluB/E/F_N"/>
</dbReference>
<dbReference type="NCBIfam" id="TIGR00071">
    <property type="entry name" value="hisT_truA"/>
    <property type="match status" value="1"/>
</dbReference>
<dbReference type="PANTHER" id="PTHR11142">
    <property type="entry name" value="PSEUDOURIDYLATE SYNTHASE"/>
    <property type="match status" value="1"/>
</dbReference>
<dbReference type="PANTHER" id="PTHR11142:SF0">
    <property type="entry name" value="TRNA PSEUDOURIDINE SYNTHASE-LIKE 1"/>
    <property type="match status" value="1"/>
</dbReference>
<dbReference type="Pfam" id="PF01416">
    <property type="entry name" value="PseudoU_synth_1"/>
    <property type="match status" value="2"/>
</dbReference>
<dbReference type="PIRSF" id="PIRSF001430">
    <property type="entry name" value="tRNA_psdUrid_synth"/>
    <property type="match status" value="1"/>
</dbReference>
<dbReference type="SUPFAM" id="SSF55120">
    <property type="entry name" value="Pseudouridine synthase"/>
    <property type="match status" value="1"/>
</dbReference>
<feature type="chain" id="PRO_1000017076" description="tRNA pseudouridine synthase A">
    <location>
        <begin position="1"/>
        <end position="270"/>
    </location>
</feature>
<feature type="region of interest" description="RNA binding" evidence="1">
    <location>
        <begin position="107"/>
        <end position="111"/>
    </location>
</feature>
<feature type="region of interest" description="Interaction with tRNA" evidence="1">
    <location>
        <begin position="168"/>
        <end position="172"/>
    </location>
</feature>
<feature type="active site" description="Nucleophile" evidence="1">
    <location>
        <position position="60"/>
    </location>
</feature>
<feature type="binding site" evidence="1">
    <location>
        <position position="118"/>
    </location>
    <ligand>
        <name>substrate</name>
    </ligand>
</feature>
<feature type="site" description="Interaction with tRNA; Important for base-flipping" evidence="1">
    <location>
        <position position="58"/>
    </location>
</feature>
<feature type="site" description="Interaction with tRNA" evidence="1">
    <location>
        <position position="78"/>
    </location>
</feature>
<feature type="site" description="Interaction with tRNA" evidence="1">
    <location>
        <position position="110"/>
    </location>
</feature>
<feature type="site" description="Interaction with tRNA" evidence="1">
    <location>
        <position position="126"/>
    </location>
</feature>
<feature type="site" description="Interaction with tRNA" evidence="1">
    <location>
        <position position="139"/>
    </location>
</feature>
<accession>Q0TFC8</accession>
<protein>
    <recommendedName>
        <fullName evidence="1">tRNA pseudouridine synthase A</fullName>
        <ecNumber evidence="1">5.4.99.12</ecNumber>
    </recommendedName>
    <alternativeName>
        <fullName evidence="1">tRNA pseudouridine(38-40) synthase</fullName>
    </alternativeName>
    <alternativeName>
        <fullName evidence="1">tRNA pseudouridylate synthase I</fullName>
    </alternativeName>
    <alternativeName>
        <fullName evidence="1">tRNA-uridine isomerase I</fullName>
    </alternativeName>
</protein>
<sequence length="270" mass="30413">MSDQQQPPVYKIALGIEYDGSRYYGWQRQNEVRSVQEKLEKALSQVANEPITVFCAGRTDAGVHGTGQVVHFETTAQRKDAAWTLGVNANLPGDIAVRWVKAVPDDFHARFSATARRYRYIIYNHRLRPAVLSKGVTHFYEPLDAERMHRAAQCLLGENDFTSFRAVQCQSRTPWRNVMHINVTRHGPYVVVDIKANAFVHHMVRNIVGSLMEVGAHNQPESWIAELLAAKDRTLAAATAKAEGLYLVAVDYPDRYDLPKPPMGPLFLAD</sequence>
<comment type="function">
    <text evidence="1">Formation of pseudouridine at positions 38, 39 and 40 in the anticodon stem and loop of transfer RNAs.</text>
</comment>
<comment type="catalytic activity">
    <reaction evidence="1">
        <text>uridine(38/39/40) in tRNA = pseudouridine(38/39/40) in tRNA</text>
        <dbReference type="Rhea" id="RHEA:22376"/>
        <dbReference type="Rhea" id="RHEA-COMP:10085"/>
        <dbReference type="Rhea" id="RHEA-COMP:10087"/>
        <dbReference type="ChEBI" id="CHEBI:65314"/>
        <dbReference type="ChEBI" id="CHEBI:65315"/>
        <dbReference type="EC" id="5.4.99.12"/>
    </reaction>
</comment>
<comment type="subunit">
    <text evidence="1">Homodimer.</text>
</comment>
<comment type="similarity">
    <text evidence="1">Belongs to the tRNA pseudouridine synthase TruA family.</text>
</comment>
<organism>
    <name type="scientific">Escherichia coli O6:K15:H31 (strain 536 / UPEC)</name>
    <dbReference type="NCBI Taxonomy" id="362663"/>
    <lineage>
        <taxon>Bacteria</taxon>
        <taxon>Pseudomonadati</taxon>
        <taxon>Pseudomonadota</taxon>
        <taxon>Gammaproteobacteria</taxon>
        <taxon>Enterobacterales</taxon>
        <taxon>Enterobacteriaceae</taxon>
        <taxon>Escherichia</taxon>
    </lineage>
</organism>
<reference key="1">
    <citation type="journal article" date="2006" name="Mol. Microbiol.">
        <title>Role of pathogenicity island-associated integrases in the genome plasticity of uropathogenic Escherichia coli strain 536.</title>
        <authorList>
            <person name="Hochhut B."/>
            <person name="Wilde C."/>
            <person name="Balling G."/>
            <person name="Middendorf B."/>
            <person name="Dobrindt U."/>
            <person name="Brzuszkiewicz E."/>
            <person name="Gottschalk G."/>
            <person name="Carniel E."/>
            <person name="Hacker J."/>
        </authorList>
    </citation>
    <scope>NUCLEOTIDE SEQUENCE [LARGE SCALE GENOMIC DNA]</scope>
    <source>
        <strain>536 / UPEC</strain>
    </source>
</reference>
<gene>
    <name evidence="1" type="primary">truA</name>
    <name type="ordered locus">ECP_2357</name>
</gene>
<evidence type="ECO:0000255" key="1">
    <source>
        <dbReference type="HAMAP-Rule" id="MF_00171"/>
    </source>
</evidence>